<accession>Q5QWB5</accession>
<comment type="function">
    <text evidence="1">One of the primary rRNA binding proteins, it binds directly to 16S rRNA where it nucleates assembly of the head domain of the 30S subunit. Is located at the subunit interface close to the decoding center, probably blocks exit of the E-site tRNA.</text>
</comment>
<comment type="subunit">
    <text evidence="1">Part of the 30S ribosomal subunit. Contacts proteins S9 and S11.</text>
</comment>
<comment type="similarity">
    <text evidence="1">Belongs to the universal ribosomal protein uS7 family.</text>
</comment>
<reference key="1">
    <citation type="journal article" date="2004" name="Proc. Natl. Acad. Sci. U.S.A.">
        <title>Genome sequence of the deep-sea gamma-proteobacterium Idiomarina loihiensis reveals amino acid fermentation as a source of carbon and energy.</title>
        <authorList>
            <person name="Hou S."/>
            <person name="Saw J.H."/>
            <person name="Lee K.S."/>
            <person name="Freitas T.A."/>
            <person name="Belisle C."/>
            <person name="Kawarabayasi Y."/>
            <person name="Donachie S.P."/>
            <person name="Pikina A."/>
            <person name="Galperin M.Y."/>
            <person name="Koonin E.V."/>
            <person name="Makarova K.S."/>
            <person name="Omelchenko M.V."/>
            <person name="Sorokin A."/>
            <person name="Wolf Y.I."/>
            <person name="Li Q.X."/>
            <person name="Keum Y.S."/>
            <person name="Campbell S."/>
            <person name="Denery J."/>
            <person name="Aizawa S."/>
            <person name="Shibata S."/>
            <person name="Malahoff A."/>
            <person name="Alam M."/>
        </authorList>
    </citation>
    <scope>NUCLEOTIDE SEQUENCE [LARGE SCALE GENOMIC DNA]</scope>
    <source>
        <strain>ATCC BAA-735 / DSM 15497 / L2-TR</strain>
    </source>
</reference>
<name>RS7_IDILO</name>
<organism>
    <name type="scientific">Idiomarina loihiensis (strain ATCC BAA-735 / DSM 15497 / L2-TR)</name>
    <dbReference type="NCBI Taxonomy" id="283942"/>
    <lineage>
        <taxon>Bacteria</taxon>
        <taxon>Pseudomonadati</taxon>
        <taxon>Pseudomonadota</taxon>
        <taxon>Gammaproteobacteria</taxon>
        <taxon>Alteromonadales</taxon>
        <taxon>Idiomarinaceae</taxon>
        <taxon>Idiomarina</taxon>
    </lineage>
</organism>
<evidence type="ECO:0000255" key="1">
    <source>
        <dbReference type="HAMAP-Rule" id="MF_00480"/>
    </source>
</evidence>
<evidence type="ECO:0000305" key="2"/>
<keyword id="KW-1185">Reference proteome</keyword>
<keyword id="KW-0687">Ribonucleoprotein</keyword>
<keyword id="KW-0689">Ribosomal protein</keyword>
<keyword id="KW-0694">RNA-binding</keyword>
<keyword id="KW-0699">rRNA-binding</keyword>
<keyword id="KW-0820">tRNA-binding</keyword>
<gene>
    <name evidence="1" type="primary">rpsG</name>
    <name type="ordered locus">IL0348</name>
</gene>
<proteinExistence type="inferred from homology"/>
<feature type="chain" id="PRO_0000124275" description="Small ribosomal subunit protein uS7">
    <location>
        <begin position="1"/>
        <end position="156"/>
    </location>
</feature>
<sequence>MPRRRVIGQRKILPDPKFGSELLAKFINVVMVDGKKAVAEKIIYGALDILAEKSGKDRLEVFDTILDNIRPMVEVKSRRVGGSTYQVPVEVRPVRRNALAMRWLVDAARTRGEKSMSQRLAAEMLDASENKGSAVKKREDVHRMAEANKAFAHYRW</sequence>
<dbReference type="EMBL" id="AE017340">
    <property type="protein sequence ID" value="AAV81191.1"/>
    <property type="molecule type" value="Genomic_DNA"/>
</dbReference>
<dbReference type="RefSeq" id="WP_011233610.1">
    <property type="nucleotide sequence ID" value="NC_006512.1"/>
</dbReference>
<dbReference type="SMR" id="Q5QWB5"/>
<dbReference type="STRING" id="283942.IL0348"/>
<dbReference type="GeneID" id="41335500"/>
<dbReference type="KEGG" id="ilo:IL0348"/>
<dbReference type="eggNOG" id="COG0049">
    <property type="taxonomic scope" value="Bacteria"/>
</dbReference>
<dbReference type="HOGENOM" id="CLU_072226_1_1_6"/>
<dbReference type="OrthoDB" id="9807653at2"/>
<dbReference type="Proteomes" id="UP000001171">
    <property type="component" value="Chromosome"/>
</dbReference>
<dbReference type="GO" id="GO:0015935">
    <property type="term" value="C:small ribosomal subunit"/>
    <property type="evidence" value="ECO:0007669"/>
    <property type="project" value="InterPro"/>
</dbReference>
<dbReference type="GO" id="GO:0019843">
    <property type="term" value="F:rRNA binding"/>
    <property type="evidence" value="ECO:0007669"/>
    <property type="project" value="UniProtKB-UniRule"/>
</dbReference>
<dbReference type="GO" id="GO:0003735">
    <property type="term" value="F:structural constituent of ribosome"/>
    <property type="evidence" value="ECO:0007669"/>
    <property type="project" value="InterPro"/>
</dbReference>
<dbReference type="GO" id="GO:0000049">
    <property type="term" value="F:tRNA binding"/>
    <property type="evidence" value="ECO:0007669"/>
    <property type="project" value="UniProtKB-UniRule"/>
</dbReference>
<dbReference type="GO" id="GO:0006412">
    <property type="term" value="P:translation"/>
    <property type="evidence" value="ECO:0007669"/>
    <property type="project" value="UniProtKB-UniRule"/>
</dbReference>
<dbReference type="CDD" id="cd14869">
    <property type="entry name" value="uS7_Bacteria"/>
    <property type="match status" value="1"/>
</dbReference>
<dbReference type="FunFam" id="1.10.455.10:FF:000001">
    <property type="entry name" value="30S ribosomal protein S7"/>
    <property type="match status" value="1"/>
</dbReference>
<dbReference type="Gene3D" id="1.10.455.10">
    <property type="entry name" value="Ribosomal protein S7 domain"/>
    <property type="match status" value="1"/>
</dbReference>
<dbReference type="HAMAP" id="MF_00480_B">
    <property type="entry name" value="Ribosomal_uS7_B"/>
    <property type="match status" value="1"/>
</dbReference>
<dbReference type="InterPro" id="IPR000235">
    <property type="entry name" value="Ribosomal_uS7"/>
</dbReference>
<dbReference type="InterPro" id="IPR005717">
    <property type="entry name" value="Ribosomal_uS7_bac/org-type"/>
</dbReference>
<dbReference type="InterPro" id="IPR020606">
    <property type="entry name" value="Ribosomal_uS7_CS"/>
</dbReference>
<dbReference type="InterPro" id="IPR023798">
    <property type="entry name" value="Ribosomal_uS7_dom"/>
</dbReference>
<dbReference type="InterPro" id="IPR036823">
    <property type="entry name" value="Ribosomal_uS7_dom_sf"/>
</dbReference>
<dbReference type="NCBIfam" id="TIGR01029">
    <property type="entry name" value="rpsG_bact"/>
    <property type="match status" value="1"/>
</dbReference>
<dbReference type="PANTHER" id="PTHR11205">
    <property type="entry name" value="RIBOSOMAL PROTEIN S7"/>
    <property type="match status" value="1"/>
</dbReference>
<dbReference type="Pfam" id="PF00177">
    <property type="entry name" value="Ribosomal_S7"/>
    <property type="match status" value="1"/>
</dbReference>
<dbReference type="PIRSF" id="PIRSF002122">
    <property type="entry name" value="RPS7p_RPS7a_RPS5e_RPS7o"/>
    <property type="match status" value="1"/>
</dbReference>
<dbReference type="SUPFAM" id="SSF47973">
    <property type="entry name" value="Ribosomal protein S7"/>
    <property type="match status" value="1"/>
</dbReference>
<dbReference type="PROSITE" id="PS00052">
    <property type="entry name" value="RIBOSOMAL_S7"/>
    <property type="match status" value="1"/>
</dbReference>
<protein>
    <recommendedName>
        <fullName evidence="1">Small ribosomal subunit protein uS7</fullName>
    </recommendedName>
    <alternativeName>
        <fullName evidence="2">30S ribosomal protein S7</fullName>
    </alternativeName>
</protein>